<comment type="function">
    <text evidence="1">Part of the ABC transporter complex PstSACB involved in phosphate import.</text>
</comment>
<comment type="subunit">
    <text evidence="4">The complex is composed of two ATP-binding proteins (PstB), two transmembrane proteins (PstC and PstA) and a solute-binding protein (PstS).</text>
</comment>
<comment type="subcellular location">
    <subcellularLocation>
        <location evidence="4">Cell membrane</location>
        <topology evidence="4">Lipid-anchor</topology>
    </subcellularLocation>
</comment>
<comment type="similarity">
    <text evidence="4">Belongs to the PstS family.</text>
</comment>
<accession>Q5HPF2</accession>
<protein>
    <recommendedName>
        <fullName>Phosphate-binding protein PstS</fullName>
        <shortName>PBP</shortName>
    </recommendedName>
</protein>
<evidence type="ECO:0000250" key="1"/>
<evidence type="ECO:0000255" key="2">
    <source>
        <dbReference type="PROSITE-ProRule" id="PRU00303"/>
    </source>
</evidence>
<evidence type="ECO:0000256" key="3">
    <source>
        <dbReference type="SAM" id="MobiDB-lite"/>
    </source>
</evidence>
<evidence type="ECO:0000305" key="4"/>
<reference key="1">
    <citation type="journal article" date="2005" name="J. Bacteriol.">
        <title>Insights on evolution of virulence and resistance from the complete genome analysis of an early methicillin-resistant Staphylococcus aureus strain and a biofilm-producing methicillin-resistant Staphylococcus epidermidis strain.</title>
        <authorList>
            <person name="Gill S.R."/>
            <person name="Fouts D.E."/>
            <person name="Archer G.L."/>
            <person name="Mongodin E.F."/>
            <person name="DeBoy R.T."/>
            <person name="Ravel J."/>
            <person name="Paulsen I.T."/>
            <person name="Kolonay J.F."/>
            <person name="Brinkac L.M."/>
            <person name="Beanan M.J."/>
            <person name="Dodson R.J."/>
            <person name="Daugherty S.C."/>
            <person name="Madupu R."/>
            <person name="Angiuoli S.V."/>
            <person name="Durkin A.S."/>
            <person name="Haft D.H."/>
            <person name="Vamathevan J.J."/>
            <person name="Khouri H."/>
            <person name="Utterback T.R."/>
            <person name="Lee C."/>
            <person name="Dimitrov G."/>
            <person name="Jiang L."/>
            <person name="Qin H."/>
            <person name="Weidman J."/>
            <person name="Tran K."/>
            <person name="Kang K.H."/>
            <person name="Hance I.R."/>
            <person name="Nelson K.E."/>
            <person name="Fraser C.M."/>
        </authorList>
    </citation>
    <scope>NUCLEOTIDE SEQUENCE [LARGE SCALE GENOMIC DNA]</scope>
    <source>
        <strain>ATCC 35984 / DSM 28319 / BCRC 17069 / CCUG 31568 / BM 3577 / RP62A</strain>
    </source>
</reference>
<gene>
    <name type="primary">pstS</name>
    <name type="ordered locus">SERP0960</name>
</gene>
<organism>
    <name type="scientific">Staphylococcus epidermidis (strain ATCC 35984 / DSM 28319 / BCRC 17069 / CCUG 31568 / BM 3577 / RP62A)</name>
    <dbReference type="NCBI Taxonomy" id="176279"/>
    <lineage>
        <taxon>Bacteria</taxon>
        <taxon>Bacillati</taxon>
        <taxon>Bacillota</taxon>
        <taxon>Bacilli</taxon>
        <taxon>Bacillales</taxon>
        <taxon>Staphylococcaceae</taxon>
        <taxon>Staphylococcus</taxon>
    </lineage>
</organism>
<sequence>MKKWQLVGTTVLGASVLLGACGGNDGGSGDGKDLKGSAKGEGSSTVAPIVEKLNEKWAKDHKDAKISSGQAGTGAGFQKFIAGETDFSDASRPIKDEEKKKLEDKGIKYHEFKIAQDGVTIAVNKDNDFVKELTKSQLKDIYSGKAKTWKDVNSSWPDKKINAVSPNSSHGTYDFFEEEVMDKQDIKAEKNADTNAIVSSVTKNKEGIGYFGYNFYEQNKDKLKEVKIKDDNGKVTEPTKKTIQNGSYALSRPLFIYAKDKSLKDNKVMSEFMKFVLEDEGQAAEDAGYVASPKKTYKSQLDDLKDFLDKHQKSDKKDDKTSEDK</sequence>
<feature type="signal peptide" evidence="2">
    <location>
        <begin position="1"/>
        <end position="20"/>
    </location>
</feature>
<feature type="chain" id="PRO_0000281662" description="Phosphate-binding protein PstS">
    <location>
        <begin position="21"/>
        <end position="325"/>
    </location>
</feature>
<feature type="region of interest" description="Disordered" evidence="3">
    <location>
        <begin position="23"/>
        <end position="46"/>
    </location>
</feature>
<feature type="lipid moiety-binding region" description="N-palmitoyl cysteine" evidence="2">
    <location>
        <position position="21"/>
    </location>
</feature>
<feature type="lipid moiety-binding region" description="S-diacylglycerol cysteine" evidence="2">
    <location>
        <position position="21"/>
    </location>
</feature>
<proteinExistence type="inferred from homology"/>
<name>PSTS_STAEQ</name>
<dbReference type="EMBL" id="CP000029">
    <property type="protein sequence ID" value="AAW54387.1"/>
    <property type="molecule type" value="Genomic_DNA"/>
</dbReference>
<dbReference type="RefSeq" id="WP_002486097.1">
    <property type="nucleotide sequence ID" value="NC_002976.3"/>
</dbReference>
<dbReference type="SMR" id="Q5HPF2"/>
<dbReference type="STRING" id="176279.SERP0960"/>
<dbReference type="KEGG" id="ser:SERP0960"/>
<dbReference type="eggNOG" id="COG0226">
    <property type="taxonomic scope" value="Bacteria"/>
</dbReference>
<dbReference type="HOGENOM" id="CLU_026228_1_1_9"/>
<dbReference type="Proteomes" id="UP000000531">
    <property type="component" value="Chromosome"/>
</dbReference>
<dbReference type="GO" id="GO:0005886">
    <property type="term" value="C:plasma membrane"/>
    <property type="evidence" value="ECO:0007669"/>
    <property type="project" value="UniProtKB-SubCell"/>
</dbReference>
<dbReference type="GO" id="GO:0042301">
    <property type="term" value="F:phosphate ion binding"/>
    <property type="evidence" value="ECO:0007669"/>
    <property type="project" value="InterPro"/>
</dbReference>
<dbReference type="GO" id="GO:0006817">
    <property type="term" value="P:phosphate ion transport"/>
    <property type="evidence" value="ECO:0007669"/>
    <property type="project" value="UniProtKB-KW"/>
</dbReference>
<dbReference type="CDD" id="cd13654">
    <property type="entry name" value="PBP2_phosphate_like_2"/>
    <property type="match status" value="1"/>
</dbReference>
<dbReference type="Gene3D" id="3.40.190.10">
    <property type="entry name" value="Periplasmic binding protein-like II"/>
    <property type="match status" value="2"/>
</dbReference>
<dbReference type="InterPro" id="IPR024370">
    <property type="entry name" value="PBP_domain"/>
</dbReference>
<dbReference type="InterPro" id="IPR011862">
    <property type="entry name" value="Phos-bd"/>
</dbReference>
<dbReference type="InterPro" id="IPR050811">
    <property type="entry name" value="Phosphate_ABC_transporter"/>
</dbReference>
<dbReference type="NCBIfam" id="TIGR02136">
    <property type="entry name" value="ptsS_2"/>
    <property type="match status" value="1"/>
</dbReference>
<dbReference type="PANTHER" id="PTHR30570">
    <property type="entry name" value="PERIPLASMIC PHOSPHATE BINDING COMPONENT OF PHOSPHATE ABC TRANSPORTER"/>
    <property type="match status" value="1"/>
</dbReference>
<dbReference type="PANTHER" id="PTHR30570:SF1">
    <property type="entry name" value="PHOSPHATE-BINDING PROTEIN PSTS"/>
    <property type="match status" value="1"/>
</dbReference>
<dbReference type="Pfam" id="PF12849">
    <property type="entry name" value="PBP_like_2"/>
    <property type="match status" value="1"/>
</dbReference>
<dbReference type="SUPFAM" id="SSF53850">
    <property type="entry name" value="Periplasmic binding protein-like II"/>
    <property type="match status" value="1"/>
</dbReference>
<dbReference type="PROSITE" id="PS51257">
    <property type="entry name" value="PROKAR_LIPOPROTEIN"/>
    <property type="match status" value="1"/>
</dbReference>
<keyword id="KW-1003">Cell membrane</keyword>
<keyword id="KW-0449">Lipoprotein</keyword>
<keyword id="KW-0472">Membrane</keyword>
<keyword id="KW-0564">Palmitate</keyword>
<keyword id="KW-0592">Phosphate transport</keyword>
<keyword id="KW-1185">Reference proteome</keyword>
<keyword id="KW-0732">Signal</keyword>
<keyword id="KW-0813">Transport</keyword>